<sequence length="156" mass="17750">MPRRREVPKREILPDPKYHNAEVAKFVNVLMTRGKKSVAERIIYGAMDQIHKKTGKDPVEVFTQALSNVRPMVEVKSRRVGGANYQVPVEVRSIRRNALAMRWLRDAARKRAEKSMGARLAGELAEAAEGRGGAVKKREEVHRMAEANKAFAHYRF</sequence>
<gene>
    <name evidence="1" type="primary">rpsG</name>
    <name type="ordered locus">Nmul_A0763</name>
</gene>
<evidence type="ECO:0000255" key="1">
    <source>
        <dbReference type="HAMAP-Rule" id="MF_00480"/>
    </source>
</evidence>
<evidence type="ECO:0000305" key="2"/>
<protein>
    <recommendedName>
        <fullName evidence="1">Small ribosomal subunit protein uS7</fullName>
    </recommendedName>
    <alternativeName>
        <fullName evidence="2">30S ribosomal protein S7</fullName>
    </alternativeName>
</protein>
<comment type="function">
    <text evidence="1">One of the primary rRNA binding proteins, it binds directly to 16S rRNA where it nucleates assembly of the head domain of the 30S subunit. Is located at the subunit interface close to the decoding center, probably blocks exit of the E-site tRNA.</text>
</comment>
<comment type="subunit">
    <text evidence="1">Part of the 30S ribosomal subunit. Contacts proteins S9 and S11.</text>
</comment>
<comment type="similarity">
    <text evidence="1">Belongs to the universal ribosomal protein uS7 family.</text>
</comment>
<reference key="1">
    <citation type="submission" date="2005-08" db="EMBL/GenBank/DDBJ databases">
        <title>Complete sequence of chromosome 1 of Nitrosospira multiformis ATCC 25196.</title>
        <authorList>
            <person name="Copeland A."/>
            <person name="Lucas S."/>
            <person name="Lapidus A."/>
            <person name="Barry K."/>
            <person name="Detter J.C."/>
            <person name="Glavina T."/>
            <person name="Hammon N."/>
            <person name="Israni S."/>
            <person name="Pitluck S."/>
            <person name="Chain P."/>
            <person name="Malfatti S."/>
            <person name="Shin M."/>
            <person name="Vergez L."/>
            <person name="Schmutz J."/>
            <person name="Larimer F."/>
            <person name="Land M."/>
            <person name="Hauser L."/>
            <person name="Kyrpides N."/>
            <person name="Lykidis A."/>
            <person name="Richardson P."/>
        </authorList>
    </citation>
    <scope>NUCLEOTIDE SEQUENCE [LARGE SCALE GENOMIC DNA]</scope>
    <source>
        <strain>ATCC 25196 / NCIMB 11849 / C 71</strain>
    </source>
</reference>
<proteinExistence type="inferred from homology"/>
<organism>
    <name type="scientific">Nitrosospira multiformis (strain ATCC 25196 / NCIMB 11849 / C 71)</name>
    <dbReference type="NCBI Taxonomy" id="323848"/>
    <lineage>
        <taxon>Bacteria</taxon>
        <taxon>Pseudomonadati</taxon>
        <taxon>Pseudomonadota</taxon>
        <taxon>Betaproteobacteria</taxon>
        <taxon>Nitrosomonadales</taxon>
        <taxon>Nitrosomonadaceae</taxon>
        <taxon>Nitrosospira</taxon>
    </lineage>
</organism>
<keyword id="KW-1185">Reference proteome</keyword>
<keyword id="KW-0687">Ribonucleoprotein</keyword>
<keyword id="KW-0689">Ribosomal protein</keyword>
<keyword id="KW-0694">RNA-binding</keyword>
<keyword id="KW-0699">rRNA-binding</keyword>
<keyword id="KW-0820">tRNA-binding</keyword>
<dbReference type="EMBL" id="CP000103">
    <property type="protein sequence ID" value="ABB74070.1"/>
    <property type="molecule type" value="Genomic_DNA"/>
</dbReference>
<dbReference type="RefSeq" id="WP_011380120.1">
    <property type="nucleotide sequence ID" value="NC_007614.1"/>
</dbReference>
<dbReference type="SMR" id="Q2YB01"/>
<dbReference type="STRING" id="323848.Nmul_A0763"/>
<dbReference type="KEGG" id="nmu:Nmul_A0763"/>
<dbReference type="eggNOG" id="COG0049">
    <property type="taxonomic scope" value="Bacteria"/>
</dbReference>
<dbReference type="HOGENOM" id="CLU_072226_1_1_4"/>
<dbReference type="OrthoDB" id="9807653at2"/>
<dbReference type="Proteomes" id="UP000002718">
    <property type="component" value="Chromosome"/>
</dbReference>
<dbReference type="GO" id="GO:0015935">
    <property type="term" value="C:small ribosomal subunit"/>
    <property type="evidence" value="ECO:0007669"/>
    <property type="project" value="InterPro"/>
</dbReference>
<dbReference type="GO" id="GO:0019843">
    <property type="term" value="F:rRNA binding"/>
    <property type="evidence" value="ECO:0007669"/>
    <property type="project" value="UniProtKB-UniRule"/>
</dbReference>
<dbReference type="GO" id="GO:0003735">
    <property type="term" value="F:structural constituent of ribosome"/>
    <property type="evidence" value="ECO:0007669"/>
    <property type="project" value="InterPro"/>
</dbReference>
<dbReference type="GO" id="GO:0000049">
    <property type="term" value="F:tRNA binding"/>
    <property type="evidence" value="ECO:0007669"/>
    <property type="project" value="UniProtKB-UniRule"/>
</dbReference>
<dbReference type="GO" id="GO:0006412">
    <property type="term" value="P:translation"/>
    <property type="evidence" value="ECO:0007669"/>
    <property type="project" value="UniProtKB-UniRule"/>
</dbReference>
<dbReference type="CDD" id="cd14869">
    <property type="entry name" value="uS7_Bacteria"/>
    <property type="match status" value="1"/>
</dbReference>
<dbReference type="FunFam" id="1.10.455.10:FF:000001">
    <property type="entry name" value="30S ribosomal protein S7"/>
    <property type="match status" value="1"/>
</dbReference>
<dbReference type="Gene3D" id="1.10.455.10">
    <property type="entry name" value="Ribosomal protein S7 domain"/>
    <property type="match status" value="1"/>
</dbReference>
<dbReference type="HAMAP" id="MF_00480_B">
    <property type="entry name" value="Ribosomal_uS7_B"/>
    <property type="match status" value="1"/>
</dbReference>
<dbReference type="InterPro" id="IPR000235">
    <property type="entry name" value="Ribosomal_uS7"/>
</dbReference>
<dbReference type="InterPro" id="IPR005717">
    <property type="entry name" value="Ribosomal_uS7_bac/org-type"/>
</dbReference>
<dbReference type="InterPro" id="IPR020606">
    <property type="entry name" value="Ribosomal_uS7_CS"/>
</dbReference>
<dbReference type="InterPro" id="IPR023798">
    <property type="entry name" value="Ribosomal_uS7_dom"/>
</dbReference>
<dbReference type="InterPro" id="IPR036823">
    <property type="entry name" value="Ribosomal_uS7_dom_sf"/>
</dbReference>
<dbReference type="NCBIfam" id="TIGR01029">
    <property type="entry name" value="rpsG_bact"/>
    <property type="match status" value="1"/>
</dbReference>
<dbReference type="PANTHER" id="PTHR11205">
    <property type="entry name" value="RIBOSOMAL PROTEIN S7"/>
    <property type="match status" value="1"/>
</dbReference>
<dbReference type="Pfam" id="PF00177">
    <property type="entry name" value="Ribosomal_S7"/>
    <property type="match status" value="1"/>
</dbReference>
<dbReference type="PIRSF" id="PIRSF002122">
    <property type="entry name" value="RPS7p_RPS7a_RPS5e_RPS7o"/>
    <property type="match status" value="1"/>
</dbReference>
<dbReference type="SUPFAM" id="SSF47973">
    <property type="entry name" value="Ribosomal protein S7"/>
    <property type="match status" value="1"/>
</dbReference>
<dbReference type="PROSITE" id="PS00052">
    <property type="entry name" value="RIBOSOMAL_S7"/>
    <property type="match status" value="1"/>
</dbReference>
<name>RS7_NITMU</name>
<feature type="chain" id="PRO_0000241764" description="Small ribosomal subunit protein uS7">
    <location>
        <begin position="1"/>
        <end position="156"/>
    </location>
</feature>
<accession>Q2YB01</accession>